<organism>
    <name type="scientific">Drosophila mulleri</name>
    <name type="common">Fruit fly</name>
    <dbReference type="NCBI Taxonomy" id="7231"/>
    <lineage>
        <taxon>Eukaryota</taxon>
        <taxon>Metazoa</taxon>
        <taxon>Ecdysozoa</taxon>
        <taxon>Arthropoda</taxon>
        <taxon>Hexapoda</taxon>
        <taxon>Insecta</taxon>
        <taxon>Pterygota</taxon>
        <taxon>Neoptera</taxon>
        <taxon>Endopterygota</taxon>
        <taxon>Diptera</taxon>
        <taxon>Brachycera</taxon>
        <taxon>Muscomorpha</taxon>
        <taxon>Ephydroidea</taxon>
        <taxon>Drosophilidae</taxon>
        <taxon>Drosophila</taxon>
    </lineage>
</organism>
<keyword id="KW-0520">NAD</keyword>
<keyword id="KW-0560">Oxidoreductase</keyword>
<proteinExistence type="inferred from homology"/>
<name>ADH2_DROMU</name>
<feature type="initiator methionine" description="Removed">
    <location>
        <position position="1"/>
    </location>
</feature>
<feature type="chain" id="PRO_0000054482" description="Alcohol dehydrogenase 2">
    <location>
        <begin position="2"/>
        <end position="254"/>
    </location>
</feature>
<feature type="active site" description="Proton acceptor" evidence="2">
    <location>
        <position position="151"/>
    </location>
</feature>
<feature type="binding site" evidence="1">
    <location>
        <begin position="10"/>
        <end position="33"/>
    </location>
    <ligand>
        <name>NAD(+)</name>
        <dbReference type="ChEBI" id="CHEBI:57540"/>
    </ligand>
</feature>
<feature type="binding site" evidence="1">
    <location>
        <position position="138"/>
    </location>
    <ligand>
        <name>substrate</name>
    </ligand>
</feature>
<accession>P07160</accession>
<reference key="1">
    <citation type="journal article" date="1985" name="Nucleic Acids Res.">
        <title>Structure and transcription of the Drosophila mulleri alcohol dehydrogenase genes.</title>
        <authorList>
            <person name="Fischer J.A."/>
            <person name="Maniatis T."/>
        </authorList>
    </citation>
    <scope>NUCLEOTIDE SEQUENCE [GENOMIC DNA]</scope>
</reference>
<protein>
    <recommendedName>
        <fullName>Alcohol dehydrogenase 2</fullName>
        <ecNumber>1.1.1.1</ecNumber>
    </recommendedName>
</protein>
<dbReference type="EC" id="1.1.1.1"/>
<dbReference type="EMBL" id="X03048">
    <property type="protein sequence ID" value="CAA26856.1"/>
    <property type="molecule type" value="Genomic_DNA"/>
</dbReference>
<dbReference type="PIR" id="A24268">
    <property type="entry name" value="A24268"/>
</dbReference>
<dbReference type="SMR" id="P07160"/>
<dbReference type="FlyBase" id="FBgn0012582">
    <property type="gene designation" value="Dmul\Adh2"/>
</dbReference>
<dbReference type="GO" id="GO:0005737">
    <property type="term" value="C:cytoplasm"/>
    <property type="evidence" value="ECO:0007669"/>
    <property type="project" value="TreeGrafter"/>
</dbReference>
<dbReference type="GO" id="GO:0004022">
    <property type="term" value="F:alcohol dehydrogenase (NAD+) activity"/>
    <property type="evidence" value="ECO:0007669"/>
    <property type="project" value="UniProtKB-EC"/>
</dbReference>
<dbReference type="GO" id="GO:0006066">
    <property type="term" value="P:alcohol metabolic process"/>
    <property type="evidence" value="ECO:0007669"/>
    <property type="project" value="InterPro"/>
</dbReference>
<dbReference type="CDD" id="cd05323">
    <property type="entry name" value="ADH_SDR_c_like"/>
    <property type="match status" value="1"/>
</dbReference>
<dbReference type="FunFam" id="3.40.50.720:FF:000302">
    <property type="entry name" value="Alcohol dehydrogenase"/>
    <property type="match status" value="1"/>
</dbReference>
<dbReference type="Gene3D" id="3.40.50.720">
    <property type="entry name" value="NAD(P)-binding Rossmann-like Domain"/>
    <property type="match status" value="1"/>
</dbReference>
<dbReference type="InterPro" id="IPR002425">
    <property type="entry name" value="ADH_Drosophila-type"/>
</dbReference>
<dbReference type="InterPro" id="IPR036291">
    <property type="entry name" value="NAD(P)-bd_dom_sf"/>
</dbReference>
<dbReference type="InterPro" id="IPR020904">
    <property type="entry name" value="Sc_DH/Rdtase_CS"/>
</dbReference>
<dbReference type="InterPro" id="IPR002347">
    <property type="entry name" value="SDR_fam"/>
</dbReference>
<dbReference type="PANTHER" id="PTHR44229">
    <property type="entry name" value="15-HYDROXYPROSTAGLANDIN DEHYDROGENASE [NAD(+)]"/>
    <property type="match status" value="1"/>
</dbReference>
<dbReference type="PANTHER" id="PTHR44229:SF8">
    <property type="entry name" value="ALCOHOL DEHYDROGENASE-RELATED"/>
    <property type="match status" value="1"/>
</dbReference>
<dbReference type="Pfam" id="PF00106">
    <property type="entry name" value="adh_short"/>
    <property type="match status" value="1"/>
</dbReference>
<dbReference type="PRINTS" id="PR01168">
    <property type="entry name" value="ALCDHDRGNASE"/>
</dbReference>
<dbReference type="PRINTS" id="PR01167">
    <property type="entry name" value="INSADHFAMILY"/>
</dbReference>
<dbReference type="PRINTS" id="PR00080">
    <property type="entry name" value="SDRFAMILY"/>
</dbReference>
<dbReference type="SUPFAM" id="SSF51735">
    <property type="entry name" value="NAD(P)-binding Rossmann-fold domains"/>
    <property type="match status" value="1"/>
</dbReference>
<dbReference type="PROSITE" id="PS00061">
    <property type="entry name" value="ADH_SHORT"/>
    <property type="match status" value="1"/>
</dbReference>
<comment type="catalytic activity">
    <reaction evidence="2">
        <text>a primary alcohol + NAD(+) = an aldehyde + NADH + H(+)</text>
        <dbReference type="Rhea" id="RHEA:10736"/>
        <dbReference type="ChEBI" id="CHEBI:15378"/>
        <dbReference type="ChEBI" id="CHEBI:15734"/>
        <dbReference type="ChEBI" id="CHEBI:17478"/>
        <dbReference type="ChEBI" id="CHEBI:57540"/>
        <dbReference type="ChEBI" id="CHEBI:57945"/>
        <dbReference type="EC" id="1.1.1.1"/>
    </reaction>
</comment>
<comment type="catalytic activity">
    <reaction evidence="2">
        <text>a secondary alcohol + NAD(+) = a ketone + NADH + H(+)</text>
        <dbReference type="Rhea" id="RHEA:10740"/>
        <dbReference type="ChEBI" id="CHEBI:15378"/>
        <dbReference type="ChEBI" id="CHEBI:17087"/>
        <dbReference type="ChEBI" id="CHEBI:35681"/>
        <dbReference type="ChEBI" id="CHEBI:57540"/>
        <dbReference type="ChEBI" id="CHEBI:57945"/>
        <dbReference type="EC" id="1.1.1.1"/>
    </reaction>
</comment>
<comment type="subunit">
    <text>Homodimer.</text>
</comment>
<comment type="similarity">
    <text evidence="3">Belongs to the short-chain dehydrogenases/reductases (SDR) family.</text>
</comment>
<gene>
    <name type="primary">Adh2</name>
</gene>
<sequence>MVIANKNIIFVAGLGGIGFDTSREIVKSGPKNLVILDRIENPAAIAELKALNPKVTVTFYPYDVTVSVAETTKLLKTIFDKLKTVDLLINGAGILDDYQIERTIAVNFTGTVNTTTAIMSFWDKRKGGPGGIIANICSVTGFNAIYQVPVYSASKAAALSFTNSLAKLAPITGVTAYSINPGITKTTLVHKFNSWLDVEPRVAELLLEHPTQTTLQCAQNFVKAIEANQNGAIWKLDLGTLEAIEWTKHWDSHI</sequence>
<evidence type="ECO:0000250" key="1"/>
<evidence type="ECO:0000255" key="2">
    <source>
        <dbReference type="PROSITE-ProRule" id="PRU10001"/>
    </source>
</evidence>
<evidence type="ECO:0000305" key="3"/>